<comment type="function">
    <text evidence="1">Bifunctional enzyme which can phosphorylate or dephosphorylate isocitrate dehydrogenase (IDH) on a specific serine residue. This is a regulatory mechanism which enables bacteria to bypass the Krebs cycle via the glyoxylate shunt in response to the source of carbon. When bacteria are grown on glucose, IDH is fully active and unphosphorylated, but when grown on acetate or ethanol, the activity of IDH declines drastically concomitant with its phosphorylation.</text>
</comment>
<comment type="catalytic activity">
    <reaction evidence="1">
        <text>L-seryl-[isocitrate dehydrogenase] + ATP = O-phospho-L-seryl-[isocitrate dehydrogenase] + ADP + H(+)</text>
        <dbReference type="Rhea" id="RHEA:43540"/>
        <dbReference type="Rhea" id="RHEA-COMP:10605"/>
        <dbReference type="Rhea" id="RHEA-COMP:10606"/>
        <dbReference type="ChEBI" id="CHEBI:15378"/>
        <dbReference type="ChEBI" id="CHEBI:29999"/>
        <dbReference type="ChEBI" id="CHEBI:30616"/>
        <dbReference type="ChEBI" id="CHEBI:83421"/>
        <dbReference type="ChEBI" id="CHEBI:456216"/>
        <dbReference type="EC" id="2.7.11.5"/>
    </reaction>
</comment>
<comment type="subcellular location">
    <subcellularLocation>
        <location evidence="1">Cytoplasm</location>
    </subcellularLocation>
</comment>
<comment type="similarity">
    <text evidence="1">Belongs to the AceK family.</text>
</comment>
<protein>
    <recommendedName>
        <fullName evidence="1">Isocitrate dehydrogenase kinase/phosphatase</fullName>
        <shortName evidence="1">IDH kinase/phosphatase</shortName>
        <shortName evidence="1">IDHK/P</shortName>
        <ecNumber evidence="1">2.7.11.5</ecNumber>
        <ecNumber evidence="1">3.1.3.-</ecNumber>
    </recommendedName>
</protein>
<evidence type="ECO:0000255" key="1">
    <source>
        <dbReference type="HAMAP-Rule" id="MF_00747"/>
    </source>
</evidence>
<organism>
    <name type="scientific">Escherichia coli (strain ATCC 8739 / DSM 1576 / NBRC 3972 / NCIMB 8545 / WDCM 00012 / Crooks)</name>
    <dbReference type="NCBI Taxonomy" id="481805"/>
    <lineage>
        <taxon>Bacteria</taxon>
        <taxon>Pseudomonadati</taxon>
        <taxon>Pseudomonadota</taxon>
        <taxon>Gammaproteobacteria</taxon>
        <taxon>Enterobacterales</taxon>
        <taxon>Enterobacteriaceae</taxon>
        <taxon>Escherichia</taxon>
    </lineage>
</organism>
<feature type="chain" id="PRO_1000083483" description="Isocitrate dehydrogenase kinase/phosphatase">
    <location>
        <begin position="1"/>
        <end position="578"/>
    </location>
</feature>
<feature type="active site" evidence="1">
    <location>
        <position position="371"/>
    </location>
</feature>
<feature type="binding site" evidence="1">
    <location>
        <begin position="315"/>
        <end position="321"/>
    </location>
    <ligand>
        <name>ATP</name>
        <dbReference type="ChEBI" id="CHEBI:30616"/>
    </ligand>
</feature>
<feature type="binding site" evidence="1">
    <location>
        <position position="336"/>
    </location>
    <ligand>
        <name>ATP</name>
        <dbReference type="ChEBI" id="CHEBI:30616"/>
    </ligand>
</feature>
<dbReference type="EC" id="2.7.11.5" evidence="1"/>
<dbReference type="EC" id="3.1.3.-" evidence="1"/>
<dbReference type="EMBL" id="CP000946">
    <property type="protein sequence ID" value="ACA79613.1"/>
    <property type="molecule type" value="Genomic_DNA"/>
</dbReference>
<dbReference type="RefSeq" id="WP_001137223.1">
    <property type="nucleotide sequence ID" value="NZ_MTFT01000033.1"/>
</dbReference>
<dbReference type="SMR" id="B1IUN6"/>
<dbReference type="KEGG" id="ecl:EcolC_4014"/>
<dbReference type="HOGENOM" id="CLU_033804_1_1_6"/>
<dbReference type="GO" id="GO:0005737">
    <property type="term" value="C:cytoplasm"/>
    <property type="evidence" value="ECO:0007669"/>
    <property type="project" value="UniProtKB-SubCell"/>
</dbReference>
<dbReference type="GO" id="GO:0008772">
    <property type="term" value="F:[isocitrate dehydrogenase (NADP+)] kinase activity"/>
    <property type="evidence" value="ECO:0007669"/>
    <property type="project" value="UniProtKB-UniRule"/>
</dbReference>
<dbReference type="GO" id="GO:0016208">
    <property type="term" value="F:AMP binding"/>
    <property type="evidence" value="ECO:0007669"/>
    <property type="project" value="TreeGrafter"/>
</dbReference>
<dbReference type="GO" id="GO:0005524">
    <property type="term" value="F:ATP binding"/>
    <property type="evidence" value="ECO:0007669"/>
    <property type="project" value="UniProtKB-UniRule"/>
</dbReference>
<dbReference type="GO" id="GO:0004721">
    <property type="term" value="F:phosphoprotein phosphatase activity"/>
    <property type="evidence" value="ECO:0007669"/>
    <property type="project" value="UniProtKB-KW"/>
</dbReference>
<dbReference type="GO" id="GO:0004674">
    <property type="term" value="F:protein serine/threonine kinase activity"/>
    <property type="evidence" value="ECO:0007669"/>
    <property type="project" value="UniProtKB-KW"/>
</dbReference>
<dbReference type="GO" id="GO:0006006">
    <property type="term" value="P:glucose metabolic process"/>
    <property type="evidence" value="ECO:0007669"/>
    <property type="project" value="InterPro"/>
</dbReference>
<dbReference type="GO" id="GO:0006097">
    <property type="term" value="P:glyoxylate cycle"/>
    <property type="evidence" value="ECO:0007669"/>
    <property type="project" value="UniProtKB-UniRule"/>
</dbReference>
<dbReference type="GO" id="GO:0006099">
    <property type="term" value="P:tricarboxylic acid cycle"/>
    <property type="evidence" value="ECO:0007669"/>
    <property type="project" value="UniProtKB-UniRule"/>
</dbReference>
<dbReference type="HAMAP" id="MF_00747">
    <property type="entry name" value="AceK"/>
    <property type="match status" value="1"/>
</dbReference>
<dbReference type="InterPro" id="IPR046855">
    <property type="entry name" value="AceK_kinase"/>
</dbReference>
<dbReference type="InterPro" id="IPR046854">
    <property type="entry name" value="AceK_regulatory"/>
</dbReference>
<dbReference type="InterPro" id="IPR010452">
    <property type="entry name" value="Isocitrate_DH_AceK"/>
</dbReference>
<dbReference type="NCBIfam" id="NF002804">
    <property type="entry name" value="PRK02946.1"/>
    <property type="match status" value="1"/>
</dbReference>
<dbReference type="PANTHER" id="PTHR39559">
    <property type="match status" value="1"/>
</dbReference>
<dbReference type="PANTHER" id="PTHR39559:SF1">
    <property type="entry name" value="ISOCITRATE DEHYDROGENASE KINASE_PHOSPHATASE"/>
    <property type="match status" value="1"/>
</dbReference>
<dbReference type="Pfam" id="PF06315">
    <property type="entry name" value="AceK_kinase"/>
    <property type="match status" value="1"/>
</dbReference>
<dbReference type="Pfam" id="PF20423">
    <property type="entry name" value="AceK_regulatory"/>
    <property type="match status" value="1"/>
</dbReference>
<dbReference type="PIRSF" id="PIRSF000719">
    <property type="entry name" value="AceK"/>
    <property type="match status" value="1"/>
</dbReference>
<keyword id="KW-0067">ATP-binding</keyword>
<keyword id="KW-0963">Cytoplasm</keyword>
<keyword id="KW-0329">Glyoxylate bypass</keyword>
<keyword id="KW-0378">Hydrolase</keyword>
<keyword id="KW-0418">Kinase</keyword>
<keyword id="KW-0547">Nucleotide-binding</keyword>
<keyword id="KW-0904">Protein phosphatase</keyword>
<keyword id="KW-0723">Serine/threonine-protein kinase</keyword>
<keyword id="KW-0808">Transferase</keyword>
<keyword id="KW-0816">Tricarboxylic acid cycle</keyword>
<proteinExistence type="inferred from homology"/>
<gene>
    <name evidence="1" type="primary">aceK</name>
    <name type="ordered locus">EcolC_4014</name>
</gene>
<sequence length="578" mass="67661">MPRGLELLIAQTILQGFDAQYGRFLEVTSGAQQRFEQADWHAVQQAMKNRIHLYDHHVGLVVEQLRCITNGQSTDAAFLLRVKEHYTRLLPDYPRFEIAESFFNSVYCRLFDHRSLTPERLFIFSSQPERRFRTIPRPLAKDFHPDHGWESLLMRVISDLPLRLRWQNKSRDIHYIIRHLTETLGTDNLAESHLQVANELFYRNKAAWLVGKLITSSGTLPFLLPIHQTDDGELFIDTCLTTTAEASIVFGFARSYFMVYAPLPAALVEWLREILPGKTTAELYMAIGCQKHAKTESYREYLVYLQGCNEQFIEAPGIRGMVMLVFTLPGFDRVFKVIKDKFAPQKEMSAAHVRACYQLVKEHDRVGRMADTQEFENFVLEKRHISPALMELLLQEAAEKITDLGEQIVIRHLYIERRMVPLNIWLEQVEGQQLRDAIEEYGNAIRQLAAANIFPGDMLFKNFGVTRHGRVVFYDYDEICYMTEVNFRDIPPPRYPEDELASEPWYSVSPGDVFPEEFRHWLCADPRIGPLFEEMHADLFRADYWRALQNRIREGHVEDVYAYRRRQRFSVRYGEMLF</sequence>
<name>ACEK_ECOLC</name>
<accession>B1IUN6</accession>
<reference key="1">
    <citation type="submission" date="2008-02" db="EMBL/GenBank/DDBJ databases">
        <title>Complete sequence of Escherichia coli C str. ATCC 8739.</title>
        <authorList>
            <person name="Copeland A."/>
            <person name="Lucas S."/>
            <person name="Lapidus A."/>
            <person name="Glavina del Rio T."/>
            <person name="Dalin E."/>
            <person name="Tice H."/>
            <person name="Bruce D."/>
            <person name="Goodwin L."/>
            <person name="Pitluck S."/>
            <person name="Kiss H."/>
            <person name="Brettin T."/>
            <person name="Detter J.C."/>
            <person name="Han C."/>
            <person name="Kuske C.R."/>
            <person name="Schmutz J."/>
            <person name="Larimer F."/>
            <person name="Land M."/>
            <person name="Hauser L."/>
            <person name="Kyrpides N."/>
            <person name="Mikhailova N."/>
            <person name="Ingram L."/>
            <person name="Richardson P."/>
        </authorList>
    </citation>
    <scope>NUCLEOTIDE SEQUENCE [LARGE SCALE GENOMIC DNA]</scope>
    <source>
        <strain>ATCC 8739 / DSM 1576 / NBRC 3972 / NCIMB 8545 / WDCM 00012 / Crooks</strain>
    </source>
</reference>